<evidence type="ECO:0000250" key="1"/>
<evidence type="ECO:0000250" key="2">
    <source>
        <dbReference type="UniProtKB" id="O35955"/>
    </source>
</evidence>
<evidence type="ECO:0000250" key="3">
    <source>
        <dbReference type="UniProtKB" id="P28065"/>
    </source>
</evidence>
<evidence type="ECO:0000255" key="4">
    <source>
        <dbReference type="PROSITE-ProRule" id="PRU00809"/>
    </source>
</evidence>
<reference key="1">
    <citation type="submission" date="1994-12" db="EMBL/GenBank/DDBJ databases">
        <authorList>
            <person name="Mizuno K."/>
            <person name="Saitou N."/>
            <person name="Tsutiya K."/>
            <person name="Sagai T."/>
            <person name="Moriwaki K."/>
            <person name="Shiroishi T."/>
        </authorList>
    </citation>
    <scope>NUCLEOTIDE SEQUENCE [MRNA]</scope>
    <source>
        <tissue>Spleen</tissue>
    </source>
</reference>
<protein>
    <recommendedName>
        <fullName>Proteasome subunit beta type-9</fullName>
        <ecNumber>3.4.25.1</ecNumber>
    </recommendedName>
    <alternativeName>
        <fullName>Low molecular mass protein 2</fullName>
    </alternativeName>
    <alternativeName>
        <fullName>Macropain chain 7</fullName>
    </alternativeName>
    <alternativeName>
        <fullName>Multicatalytic endopeptidase complex chain 7</fullName>
    </alternativeName>
    <alternativeName>
        <fullName>Proteasome chain 7</fullName>
    </alternativeName>
    <alternativeName>
        <fullName>Proteasome subunit beta-1i</fullName>
    </alternativeName>
    <alternativeName>
        <fullName>Really interesting new gene 12 protein</fullName>
    </alternativeName>
</protein>
<proteinExistence type="evidence at protein level"/>
<name>PSB9_MUSPL</name>
<keyword id="KW-0007">Acetylation</keyword>
<keyword id="KW-0963">Cytoplasm</keyword>
<keyword id="KW-0378">Hydrolase</keyword>
<keyword id="KW-0391">Immunity</keyword>
<keyword id="KW-0539">Nucleus</keyword>
<keyword id="KW-0645">Protease</keyword>
<keyword id="KW-0647">Proteasome</keyword>
<keyword id="KW-0888">Threonine protease</keyword>
<keyword id="KW-0865">Zymogen</keyword>
<dbReference type="EC" id="3.4.25.1"/>
<dbReference type="EMBL" id="D44459">
    <property type="protein sequence ID" value="BAA22580.1"/>
    <property type="molecule type" value="mRNA"/>
</dbReference>
<dbReference type="SMR" id="O35523"/>
<dbReference type="MEROPS" id="T01.013"/>
<dbReference type="GO" id="GO:0005829">
    <property type="term" value="C:cytosol"/>
    <property type="evidence" value="ECO:0007669"/>
    <property type="project" value="UniProtKB-ARBA"/>
</dbReference>
<dbReference type="GO" id="GO:0005654">
    <property type="term" value="C:nucleoplasm"/>
    <property type="evidence" value="ECO:0007669"/>
    <property type="project" value="UniProtKB-ARBA"/>
</dbReference>
<dbReference type="GO" id="GO:0005839">
    <property type="term" value="C:proteasome core complex"/>
    <property type="evidence" value="ECO:0000250"/>
    <property type="project" value="UniProtKB"/>
</dbReference>
<dbReference type="GO" id="GO:0019774">
    <property type="term" value="C:proteasome core complex, beta-subunit complex"/>
    <property type="evidence" value="ECO:0000250"/>
    <property type="project" value="UniProtKB"/>
</dbReference>
<dbReference type="GO" id="GO:1990111">
    <property type="term" value="C:spermatoproteasome complex"/>
    <property type="evidence" value="ECO:0000250"/>
    <property type="project" value="UniProtKB"/>
</dbReference>
<dbReference type="GO" id="GO:0004298">
    <property type="term" value="F:threonine-type endopeptidase activity"/>
    <property type="evidence" value="ECO:0007669"/>
    <property type="project" value="UniProtKB-KW"/>
</dbReference>
<dbReference type="GO" id="GO:0002376">
    <property type="term" value="P:immune system process"/>
    <property type="evidence" value="ECO:0007669"/>
    <property type="project" value="UniProtKB-KW"/>
</dbReference>
<dbReference type="GO" id="GO:0051603">
    <property type="term" value="P:proteolysis involved in protein catabolic process"/>
    <property type="evidence" value="ECO:0007669"/>
    <property type="project" value="InterPro"/>
</dbReference>
<dbReference type="CDD" id="cd03762">
    <property type="entry name" value="proteasome_beta_type_6"/>
    <property type="match status" value="1"/>
</dbReference>
<dbReference type="FunFam" id="3.60.20.10:FF:000010">
    <property type="entry name" value="Proteasome subunit beta type-1"/>
    <property type="match status" value="1"/>
</dbReference>
<dbReference type="Gene3D" id="3.60.20.10">
    <property type="entry name" value="Glutamine Phosphoribosylpyrophosphate, subunit 1, domain 1"/>
    <property type="match status" value="1"/>
</dbReference>
<dbReference type="InterPro" id="IPR029055">
    <property type="entry name" value="Ntn_hydrolases_N"/>
</dbReference>
<dbReference type="InterPro" id="IPR000243">
    <property type="entry name" value="Pept_T1A_subB"/>
</dbReference>
<dbReference type="InterPro" id="IPR016050">
    <property type="entry name" value="Proteasome_bsu_CS"/>
</dbReference>
<dbReference type="InterPro" id="IPR001353">
    <property type="entry name" value="Proteasome_sua/b"/>
</dbReference>
<dbReference type="InterPro" id="IPR023333">
    <property type="entry name" value="Proteasome_suB-type"/>
</dbReference>
<dbReference type="PANTHER" id="PTHR32194">
    <property type="entry name" value="METALLOPROTEASE TLDD"/>
    <property type="match status" value="1"/>
</dbReference>
<dbReference type="PANTHER" id="PTHR32194:SF12">
    <property type="entry name" value="PROTEASOME SUBUNIT BETA"/>
    <property type="match status" value="1"/>
</dbReference>
<dbReference type="Pfam" id="PF00227">
    <property type="entry name" value="Proteasome"/>
    <property type="match status" value="1"/>
</dbReference>
<dbReference type="PRINTS" id="PR00141">
    <property type="entry name" value="PROTEASOME"/>
</dbReference>
<dbReference type="SUPFAM" id="SSF56235">
    <property type="entry name" value="N-terminal nucleophile aminohydrolases (Ntn hydrolases)"/>
    <property type="match status" value="1"/>
</dbReference>
<dbReference type="PROSITE" id="PS00854">
    <property type="entry name" value="PROTEASOME_BETA_1"/>
    <property type="match status" value="1"/>
</dbReference>
<dbReference type="PROSITE" id="PS51476">
    <property type="entry name" value="PROTEASOME_BETA_2"/>
    <property type="match status" value="1"/>
</dbReference>
<feature type="propeptide" id="PRO_0000026627" description="Removed in mature form" evidence="1">
    <location>
        <begin position="1"/>
        <end position="20"/>
    </location>
</feature>
<feature type="chain" id="PRO_0000026628" description="Proteasome subunit beta type-9">
    <location>
        <begin position="21"/>
        <end position="219"/>
    </location>
</feature>
<feature type="active site" description="Nucleophile" evidence="1">
    <location>
        <position position="21"/>
    </location>
</feature>
<feature type="site" description="Cleavage; by autolysis" evidence="2">
    <location>
        <begin position="20"/>
        <end position="21"/>
    </location>
</feature>
<feature type="modified residue" description="N6-acetyllysine" evidence="3">
    <location>
        <position position="53"/>
    </location>
</feature>
<feature type="modified residue" description="N6-acetyllysine" evidence="3">
    <location>
        <position position="109"/>
    </location>
</feature>
<organism>
    <name type="scientific">Mus platythrix</name>
    <name type="common">Flat-haired mouse</name>
    <name type="synonym">Pyromys platythrix</name>
    <dbReference type="NCBI Taxonomy" id="10101"/>
    <lineage>
        <taxon>Eukaryota</taxon>
        <taxon>Metazoa</taxon>
        <taxon>Chordata</taxon>
        <taxon>Craniata</taxon>
        <taxon>Vertebrata</taxon>
        <taxon>Euteleostomi</taxon>
        <taxon>Mammalia</taxon>
        <taxon>Eutheria</taxon>
        <taxon>Euarchontoglires</taxon>
        <taxon>Glires</taxon>
        <taxon>Rodentia</taxon>
        <taxon>Myomorpha</taxon>
        <taxon>Muroidea</taxon>
        <taxon>Muridae</taxon>
        <taxon>Murinae</taxon>
        <taxon>Mus</taxon>
        <taxon>Pyromys</taxon>
    </lineage>
</organism>
<gene>
    <name type="primary">Psmb9</name>
    <name type="synonym">Lmp2</name>
    <name type="synonym">Ring12</name>
</gene>
<sequence>MLRAGAPTAGSFRTKEVHTGTTIMAVEFDGGVVVGSDSRVSAGEAVVNRVFDKLSPLHQRIFCALSGSAADAQAIADMAAYQLELHGLELEEPPLVLAAANVVKNISYKYREDLLAHLIVAGWDQREGGQVYGTMGGMLIRQPFTIGGSGSSYIYGYVDAAYKPGMTSEECRRFTTNAITLAMNRDGSSGGVIYLVTITVAGVDHRVILGDELPKFYDE</sequence>
<accession>O35523</accession>
<comment type="function">
    <text>The proteasome is a multicatalytic proteinase complex which is characterized by its ability to cleave peptides with Arg, Phe, Tyr, Leu, and Glu adjacent to the leaving group at neutral or slightly basic pH. The proteasome has an ATP-dependent proteolytic activity. This subunit is involved in antigen processing to generate class I binding peptides.</text>
</comment>
<comment type="catalytic activity">
    <reaction>
        <text>Cleavage of peptide bonds with very broad specificity.</text>
        <dbReference type="EC" id="3.4.25.1"/>
    </reaction>
</comment>
<comment type="subunit">
    <text>The 26S proteasome consists of a 20S proteasome core and two 19S regulatory subunits. The 20S proteasome core is composed of 28 subunits that are arranged in four stacked rings, resulting in a barrel-shaped structure. The two end rings are each formed by seven alpha subunits, and the two central rings are each formed by seven beta subunits. The catalytic chamber with the active sites is on the inside of the barrel. Component of the immunoproteasome, where it displaces the equivalent housekeeping subunit PSMB6. Component of the spermatoproteasome, a form of the proteasome specifically found in testis.</text>
</comment>
<comment type="subcellular location">
    <subcellularLocation>
        <location evidence="4">Cytoplasm</location>
    </subcellularLocation>
    <subcellularLocation>
        <location evidence="1">Nucleus</location>
    </subcellularLocation>
</comment>
<comment type="induction">
    <text>Up-regulated by interferon gamma (at protein level).</text>
</comment>
<comment type="PTM">
    <text evidence="2">Autocleaved. The resulting N-terminal Thr residue of the mature subunit is responsible for the nucleophile proteolytic activity.</text>
</comment>
<comment type="miscellaneous">
    <text>Encoded in the MHC class II region.</text>
</comment>
<comment type="similarity">
    <text evidence="4">Belongs to the peptidase T1B family.</text>
</comment>